<proteinExistence type="inferred from homology"/>
<evidence type="ECO:0000255" key="1">
    <source>
        <dbReference type="HAMAP-Rule" id="MF_01872"/>
    </source>
</evidence>
<protein>
    <recommendedName>
        <fullName evidence="1">tRNA1(Val) (adenine(37)-N6)-methyltransferase</fullName>
        <ecNumber evidence="1">2.1.1.223</ecNumber>
    </recommendedName>
    <alternativeName>
        <fullName evidence="1">tRNA m6A37 methyltransferase</fullName>
    </alternativeName>
</protein>
<dbReference type="EC" id="2.1.1.223" evidence="1"/>
<dbReference type="EMBL" id="AE006468">
    <property type="protein sequence ID" value="AAL21536.1"/>
    <property type="molecule type" value="Genomic_DNA"/>
</dbReference>
<dbReference type="RefSeq" id="NP_461577.1">
    <property type="nucleotide sequence ID" value="NC_003197.2"/>
</dbReference>
<dbReference type="SMR" id="Q8ZMX8"/>
<dbReference type="STRING" id="99287.STM2642"/>
<dbReference type="PaxDb" id="99287-STM2642"/>
<dbReference type="DNASU" id="1254165"/>
<dbReference type="GeneID" id="1254165"/>
<dbReference type="KEGG" id="stm:STM2642"/>
<dbReference type="PATRIC" id="fig|99287.12.peg.2792"/>
<dbReference type="HOGENOM" id="CLU_061983_0_0_6"/>
<dbReference type="OMA" id="NQYTEAF"/>
<dbReference type="PhylomeDB" id="Q8ZMX8"/>
<dbReference type="BioCyc" id="SENT99287:STM2642-MONOMER"/>
<dbReference type="Proteomes" id="UP000001014">
    <property type="component" value="Chromosome"/>
</dbReference>
<dbReference type="GO" id="GO:0005737">
    <property type="term" value="C:cytoplasm"/>
    <property type="evidence" value="ECO:0007669"/>
    <property type="project" value="UniProtKB-SubCell"/>
</dbReference>
<dbReference type="GO" id="GO:0003676">
    <property type="term" value="F:nucleic acid binding"/>
    <property type="evidence" value="ECO:0007669"/>
    <property type="project" value="InterPro"/>
</dbReference>
<dbReference type="GO" id="GO:0016430">
    <property type="term" value="F:tRNA (adenine-N6)-methyltransferase activity"/>
    <property type="evidence" value="ECO:0007669"/>
    <property type="project" value="UniProtKB-UniRule"/>
</dbReference>
<dbReference type="GO" id="GO:0032259">
    <property type="term" value="P:methylation"/>
    <property type="evidence" value="ECO:0007669"/>
    <property type="project" value="UniProtKB-KW"/>
</dbReference>
<dbReference type="GO" id="GO:0008033">
    <property type="term" value="P:tRNA processing"/>
    <property type="evidence" value="ECO:0007669"/>
    <property type="project" value="UniProtKB-UniRule"/>
</dbReference>
<dbReference type="CDD" id="cd02440">
    <property type="entry name" value="AdoMet_MTases"/>
    <property type="match status" value="1"/>
</dbReference>
<dbReference type="Gene3D" id="3.40.50.150">
    <property type="entry name" value="Vaccinia Virus protein VP39"/>
    <property type="match status" value="1"/>
</dbReference>
<dbReference type="HAMAP" id="MF_01872">
    <property type="entry name" value="tRNA_methyltr_YfiC"/>
    <property type="match status" value="1"/>
</dbReference>
<dbReference type="InterPro" id="IPR002052">
    <property type="entry name" value="DNA_methylase_N6_adenine_CS"/>
</dbReference>
<dbReference type="InterPro" id="IPR029063">
    <property type="entry name" value="SAM-dependent_MTases_sf"/>
</dbReference>
<dbReference type="InterPro" id="IPR007848">
    <property type="entry name" value="Small_mtfrase_dom"/>
</dbReference>
<dbReference type="InterPro" id="IPR050210">
    <property type="entry name" value="tRNA_Adenine-N(6)_MTase"/>
</dbReference>
<dbReference type="InterPro" id="IPR022882">
    <property type="entry name" value="tRNA_adenine-N6_MeTrfase"/>
</dbReference>
<dbReference type="NCBIfam" id="NF047853">
    <property type="entry name" value="tRm6a37MtseTrmN"/>
    <property type="match status" value="1"/>
</dbReference>
<dbReference type="PANTHER" id="PTHR47739">
    <property type="entry name" value="TRNA1(VAL) (ADENINE(37)-N6)-METHYLTRANSFERASE"/>
    <property type="match status" value="1"/>
</dbReference>
<dbReference type="PANTHER" id="PTHR47739:SF1">
    <property type="entry name" value="TRNA1(VAL) (ADENINE(37)-N6)-METHYLTRANSFERASE"/>
    <property type="match status" value="1"/>
</dbReference>
<dbReference type="Pfam" id="PF05175">
    <property type="entry name" value="MTS"/>
    <property type="match status" value="1"/>
</dbReference>
<dbReference type="SUPFAM" id="SSF53335">
    <property type="entry name" value="S-adenosyl-L-methionine-dependent methyltransferases"/>
    <property type="match status" value="1"/>
</dbReference>
<dbReference type="PROSITE" id="PS00092">
    <property type="entry name" value="N6_MTASE"/>
    <property type="match status" value="1"/>
</dbReference>
<sequence>MSQSGSVLRRNGFTFKQFFVAHDRCAMKVGTDGILLGAWAPVADVKRILDIGTGSGLLALMLAQRTDDNVPIDAVELDAGAAMQAQENVAHSPWPHRITVHTDDIQRWAPRQTVRFDLIISNPPYYEPGVECATPQREQARYTATLDHQTLLAIAADCITEDGFFCVVLPEQIGNAFTQQALNMGWHLRLRTDVAENEARLPHRVLLAFSPQAGECFSDRLVIRGSDQHYSESYTALTQAFYLFM</sequence>
<organism>
    <name type="scientific">Salmonella typhimurium (strain LT2 / SGSC1412 / ATCC 700720)</name>
    <dbReference type="NCBI Taxonomy" id="99287"/>
    <lineage>
        <taxon>Bacteria</taxon>
        <taxon>Pseudomonadati</taxon>
        <taxon>Pseudomonadota</taxon>
        <taxon>Gammaproteobacteria</taxon>
        <taxon>Enterobacterales</taxon>
        <taxon>Enterobacteriaceae</taxon>
        <taxon>Salmonella</taxon>
    </lineage>
</organism>
<feature type="chain" id="PRO_0000387412" description="tRNA1(Val) (adenine(37)-N6)-methyltransferase">
    <location>
        <begin position="1"/>
        <end position="245"/>
    </location>
</feature>
<keyword id="KW-0963">Cytoplasm</keyword>
<keyword id="KW-0489">Methyltransferase</keyword>
<keyword id="KW-1185">Reference proteome</keyword>
<keyword id="KW-0949">S-adenosyl-L-methionine</keyword>
<keyword id="KW-0808">Transferase</keyword>
<keyword id="KW-0819">tRNA processing</keyword>
<gene>
    <name evidence="1" type="primary">yfiC</name>
    <name type="ordered locus">STM2642</name>
</gene>
<accession>Q8ZMX8</accession>
<name>TRMN6_SALTY</name>
<comment type="function">
    <text evidence="1">Specifically methylates the adenine in position 37 of tRNA(1)(Val) (anticodon cmo5UAC).</text>
</comment>
<comment type="catalytic activity">
    <reaction evidence="1">
        <text>adenosine(37) in tRNA1(Val) + S-adenosyl-L-methionine = N(6)-methyladenosine(37) in tRNA1(Val) + S-adenosyl-L-homocysteine + H(+)</text>
        <dbReference type="Rhea" id="RHEA:43160"/>
        <dbReference type="Rhea" id="RHEA-COMP:10369"/>
        <dbReference type="Rhea" id="RHEA-COMP:10370"/>
        <dbReference type="ChEBI" id="CHEBI:15378"/>
        <dbReference type="ChEBI" id="CHEBI:57856"/>
        <dbReference type="ChEBI" id="CHEBI:59789"/>
        <dbReference type="ChEBI" id="CHEBI:74411"/>
        <dbReference type="ChEBI" id="CHEBI:74449"/>
        <dbReference type="EC" id="2.1.1.223"/>
    </reaction>
</comment>
<comment type="subcellular location">
    <subcellularLocation>
        <location evidence="1">Cytoplasm</location>
    </subcellularLocation>
</comment>
<comment type="similarity">
    <text evidence="1">Belongs to the methyltransferase superfamily. tRNA (adenine-N(6)-)-methyltransferase family.</text>
</comment>
<reference key="1">
    <citation type="journal article" date="2001" name="Nature">
        <title>Complete genome sequence of Salmonella enterica serovar Typhimurium LT2.</title>
        <authorList>
            <person name="McClelland M."/>
            <person name="Sanderson K.E."/>
            <person name="Spieth J."/>
            <person name="Clifton S.W."/>
            <person name="Latreille P."/>
            <person name="Courtney L."/>
            <person name="Porwollik S."/>
            <person name="Ali J."/>
            <person name="Dante M."/>
            <person name="Du F."/>
            <person name="Hou S."/>
            <person name="Layman D."/>
            <person name="Leonard S."/>
            <person name="Nguyen C."/>
            <person name="Scott K."/>
            <person name="Holmes A."/>
            <person name="Grewal N."/>
            <person name="Mulvaney E."/>
            <person name="Ryan E."/>
            <person name="Sun H."/>
            <person name="Florea L."/>
            <person name="Miller W."/>
            <person name="Stoneking T."/>
            <person name="Nhan M."/>
            <person name="Waterston R."/>
            <person name="Wilson R.K."/>
        </authorList>
    </citation>
    <scope>NUCLEOTIDE SEQUENCE [LARGE SCALE GENOMIC DNA]</scope>
    <source>
        <strain>LT2 / SGSC1412 / ATCC 700720</strain>
    </source>
</reference>